<organism>
    <name type="scientific">Coxiella burnetii (strain CbuK_Q154)</name>
    <name type="common">Coxiella burnetii (strain Q154)</name>
    <dbReference type="NCBI Taxonomy" id="434924"/>
    <lineage>
        <taxon>Bacteria</taxon>
        <taxon>Pseudomonadati</taxon>
        <taxon>Pseudomonadota</taxon>
        <taxon>Gammaproteobacteria</taxon>
        <taxon>Legionellales</taxon>
        <taxon>Coxiellaceae</taxon>
        <taxon>Coxiella</taxon>
    </lineage>
</organism>
<protein>
    <recommendedName>
        <fullName evidence="1">Transcription antitermination protein NusB</fullName>
    </recommendedName>
    <alternativeName>
        <fullName evidence="1">Antitermination factor NusB</fullName>
    </alternativeName>
</protein>
<reference key="1">
    <citation type="journal article" date="2009" name="Infect. Immun.">
        <title>Comparative genomics reveal extensive transposon-mediated genomic plasticity and diversity among potential effector proteins within the genus Coxiella.</title>
        <authorList>
            <person name="Beare P.A."/>
            <person name="Unsworth N."/>
            <person name="Andoh M."/>
            <person name="Voth D.E."/>
            <person name="Omsland A."/>
            <person name="Gilk S.D."/>
            <person name="Williams K.P."/>
            <person name="Sobral B.W."/>
            <person name="Kupko J.J. III"/>
            <person name="Porcella S.F."/>
            <person name="Samuel J.E."/>
            <person name="Heinzen R.A."/>
        </authorList>
    </citation>
    <scope>NUCLEOTIDE SEQUENCE [LARGE SCALE GENOMIC DNA]</scope>
    <source>
        <strain>CbuK_Q154</strain>
    </source>
</reference>
<evidence type="ECO:0000255" key="1">
    <source>
        <dbReference type="HAMAP-Rule" id="MF_00073"/>
    </source>
</evidence>
<dbReference type="EMBL" id="CP001020">
    <property type="protein sequence ID" value="ACJ20656.1"/>
    <property type="molecule type" value="Genomic_DNA"/>
</dbReference>
<dbReference type="RefSeq" id="WP_005771734.1">
    <property type="nucleotide sequence ID" value="NC_011528.1"/>
</dbReference>
<dbReference type="SMR" id="B6J8Q7"/>
<dbReference type="KEGG" id="cbc:CbuK_1490"/>
<dbReference type="HOGENOM" id="CLU_087843_4_1_6"/>
<dbReference type="GO" id="GO:0005829">
    <property type="term" value="C:cytosol"/>
    <property type="evidence" value="ECO:0007669"/>
    <property type="project" value="TreeGrafter"/>
</dbReference>
<dbReference type="GO" id="GO:0003723">
    <property type="term" value="F:RNA binding"/>
    <property type="evidence" value="ECO:0007669"/>
    <property type="project" value="UniProtKB-UniRule"/>
</dbReference>
<dbReference type="GO" id="GO:0006353">
    <property type="term" value="P:DNA-templated transcription termination"/>
    <property type="evidence" value="ECO:0007669"/>
    <property type="project" value="UniProtKB-UniRule"/>
</dbReference>
<dbReference type="GO" id="GO:0031564">
    <property type="term" value="P:transcription antitermination"/>
    <property type="evidence" value="ECO:0007669"/>
    <property type="project" value="UniProtKB-KW"/>
</dbReference>
<dbReference type="FunFam" id="1.10.940.10:FF:000001">
    <property type="entry name" value="Transcription antitermination factor NusB"/>
    <property type="match status" value="1"/>
</dbReference>
<dbReference type="Gene3D" id="1.10.940.10">
    <property type="entry name" value="NusB-like"/>
    <property type="match status" value="1"/>
</dbReference>
<dbReference type="HAMAP" id="MF_00073">
    <property type="entry name" value="NusB"/>
    <property type="match status" value="1"/>
</dbReference>
<dbReference type="InterPro" id="IPR035926">
    <property type="entry name" value="NusB-like_sf"/>
</dbReference>
<dbReference type="InterPro" id="IPR011605">
    <property type="entry name" value="NusB_fam"/>
</dbReference>
<dbReference type="InterPro" id="IPR006027">
    <property type="entry name" value="NusB_RsmB_TIM44"/>
</dbReference>
<dbReference type="NCBIfam" id="TIGR01951">
    <property type="entry name" value="nusB"/>
    <property type="match status" value="1"/>
</dbReference>
<dbReference type="PANTHER" id="PTHR11078:SF3">
    <property type="entry name" value="ANTITERMINATION NUSB DOMAIN-CONTAINING PROTEIN"/>
    <property type="match status" value="1"/>
</dbReference>
<dbReference type="PANTHER" id="PTHR11078">
    <property type="entry name" value="N UTILIZATION SUBSTANCE PROTEIN B-RELATED"/>
    <property type="match status" value="1"/>
</dbReference>
<dbReference type="Pfam" id="PF01029">
    <property type="entry name" value="NusB"/>
    <property type="match status" value="1"/>
</dbReference>
<dbReference type="SUPFAM" id="SSF48013">
    <property type="entry name" value="NusB-like"/>
    <property type="match status" value="1"/>
</dbReference>
<accession>B6J8Q7</accession>
<sequence length="138" mass="15887">MINKTRHNARRYALQALYQWFFCETKPDALISQFMEEHDLSDTEVAYFKEVVTGTIQHVAIIDELMTAHLDRKISALNPVELSVLRLSIYELLHRKEVPYKVVIDEALELVKEFGAEAGHKYVNAILDVLSSEIRKGV</sequence>
<proteinExistence type="inferred from homology"/>
<comment type="function">
    <text evidence="1">Involved in transcription antitermination. Required for transcription of ribosomal RNA (rRNA) genes. Binds specifically to the boxA antiterminator sequence of the ribosomal RNA (rrn) operons.</text>
</comment>
<comment type="similarity">
    <text evidence="1">Belongs to the NusB family.</text>
</comment>
<keyword id="KW-0694">RNA-binding</keyword>
<keyword id="KW-0804">Transcription</keyword>
<keyword id="KW-0889">Transcription antitermination</keyword>
<keyword id="KW-0805">Transcription regulation</keyword>
<gene>
    <name evidence="1" type="primary">nusB</name>
    <name type="ordered locus">CbuK_1490</name>
</gene>
<name>NUSB_COXB1</name>
<feature type="chain" id="PRO_1000092545" description="Transcription antitermination protein NusB">
    <location>
        <begin position="1"/>
        <end position="138"/>
    </location>
</feature>